<feature type="signal peptide" evidence="2">
    <location>
        <begin position="1"/>
        <end position="22"/>
    </location>
</feature>
<feature type="peptide" id="PRO_0000006883" description="Beta-defensin 5">
    <location>
        <begin position="23"/>
        <end position="64"/>
    </location>
</feature>
<feature type="modified residue" description="Pyrrolidone carboxylic acid" evidence="2">
    <location>
        <position position="23"/>
    </location>
</feature>
<feature type="disulfide bond" evidence="1">
    <location>
        <begin position="31"/>
        <end position="60"/>
    </location>
</feature>
<feature type="disulfide bond" evidence="1">
    <location>
        <begin position="38"/>
        <end position="53"/>
    </location>
</feature>
<feature type="disulfide bond" evidence="1">
    <location>
        <begin position="43"/>
        <end position="61"/>
    </location>
</feature>
<feature type="sequence conflict" description="In Ref. 2; AAD01523." evidence="4" ref="2">
    <original>F</original>
    <variation>S</variation>
    <location>
        <position position="54"/>
    </location>
</feature>
<evidence type="ECO:0000250" key="1"/>
<evidence type="ECO:0000269" key="2">
    <source>
    </source>
</evidence>
<evidence type="ECO:0000269" key="3">
    <source>
    </source>
</evidence>
<evidence type="ECO:0000305" key="4"/>
<sequence length="64" mass="7228">MRLHHLLLVLLFLVLSAGSGFTQVVRNPQSCRWNMGVCIPISCPGNMRQIGTCFGPRVPCCRRW</sequence>
<keyword id="KW-0044">Antibiotic</keyword>
<keyword id="KW-0929">Antimicrobial</keyword>
<keyword id="KW-0211">Defensin</keyword>
<keyword id="KW-0903">Direct protein sequencing</keyword>
<keyword id="KW-1015">Disulfide bond</keyword>
<keyword id="KW-0873">Pyrrolidone carboxylic acid</keyword>
<keyword id="KW-1185">Reference proteome</keyword>
<keyword id="KW-0964">Secreted</keyword>
<keyword id="KW-0732">Signal</keyword>
<gene>
    <name type="primary">DEFB5</name>
    <name type="synonym">BNBD5</name>
</gene>
<organism>
    <name type="scientific">Bos taurus</name>
    <name type="common">Bovine</name>
    <dbReference type="NCBI Taxonomy" id="9913"/>
    <lineage>
        <taxon>Eukaryota</taxon>
        <taxon>Metazoa</taxon>
        <taxon>Chordata</taxon>
        <taxon>Craniata</taxon>
        <taxon>Vertebrata</taxon>
        <taxon>Euteleostomi</taxon>
        <taxon>Mammalia</taxon>
        <taxon>Eutheria</taxon>
        <taxon>Laurasiatheria</taxon>
        <taxon>Artiodactyla</taxon>
        <taxon>Ruminantia</taxon>
        <taxon>Pecora</taxon>
        <taxon>Bovidae</taxon>
        <taxon>Bovinae</taxon>
        <taxon>Bos</taxon>
    </lineage>
</organism>
<comment type="function">
    <text evidence="2">Has bactericidal activity. Active against E.coli ML35 but not against S.aureus 502A.</text>
</comment>
<comment type="subcellular location">
    <subcellularLocation>
        <location>Secreted</location>
    </subcellularLocation>
</comment>
<comment type="tissue specificity">
    <text evidence="2 3">Neutrophilic granules. Alveolar macrophages.</text>
</comment>
<comment type="similarity">
    <text evidence="4">Belongs to the beta-defensin family.</text>
</comment>
<name>DEFB5_BOVIN</name>
<accession>P46163</accession>
<accession>O97533</accession>
<dbReference type="EMBL" id="AJ278799">
    <property type="protein sequence ID" value="CAC15400.1"/>
    <property type="molecule type" value="Genomic_DNA"/>
</dbReference>
<dbReference type="EMBL" id="AF014108">
    <property type="protein sequence ID" value="AAD01523.1"/>
    <property type="molecule type" value="mRNA"/>
</dbReference>
<dbReference type="PIR" id="E45495">
    <property type="entry name" value="E45495"/>
</dbReference>
<dbReference type="RefSeq" id="NP_001124233.1">
    <property type="nucleotide sequence ID" value="NM_001130761.1"/>
</dbReference>
<dbReference type="SMR" id="P46163"/>
<dbReference type="FunCoup" id="P46163">
    <property type="interactions" value="28"/>
</dbReference>
<dbReference type="PaxDb" id="9913-ENSBTAP00000018930"/>
<dbReference type="GeneID" id="783935"/>
<dbReference type="CTD" id="81007"/>
<dbReference type="HOGENOM" id="CLU_189296_4_1_1"/>
<dbReference type="InParanoid" id="P46163"/>
<dbReference type="Proteomes" id="UP000009136">
    <property type="component" value="Unplaced"/>
</dbReference>
<dbReference type="GO" id="GO:0005615">
    <property type="term" value="C:extracellular space"/>
    <property type="evidence" value="ECO:0000318"/>
    <property type="project" value="GO_Central"/>
</dbReference>
<dbReference type="GO" id="GO:0031731">
    <property type="term" value="F:CCR6 chemokine receptor binding"/>
    <property type="evidence" value="ECO:0000318"/>
    <property type="project" value="GO_Central"/>
</dbReference>
<dbReference type="GO" id="GO:0042056">
    <property type="term" value="F:chemoattractant activity"/>
    <property type="evidence" value="ECO:0000318"/>
    <property type="project" value="GO_Central"/>
</dbReference>
<dbReference type="GO" id="GO:0060326">
    <property type="term" value="P:cell chemotaxis"/>
    <property type="evidence" value="ECO:0000318"/>
    <property type="project" value="GO_Central"/>
</dbReference>
<dbReference type="GO" id="GO:0042742">
    <property type="term" value="P:defense response to bacterium"/>
    <property type="evidence" value="ECO:0000318"/>
    <property type="project" value="GO_Central"/>
</dbReference>
<dbReference type="FunFam" id="3.10.360.10:FF:000001">
    <property type="entry name" value="Beta-defensin 1"/>
    <property type="match status" value="1"/>
</dbReference>
<dbReference type="Gene3D" id="3.10.360.10">
    <property type="entry name" value="Antimicrobial Peptide, Beta-defensin 2, Chain A"/>
    <property type="match status" value="1"/>
</dbReference>
<dbReference type="InterPro" id="IPR006080">
    <property type="entry name" value="Beta/alpha-defensin_C"/>
</dbReference>
<dbReference type="InterPro" id="IPR001855">
    <property type="entry name" value="Defensin_beta-like"/>
</dbReference>
<dbReference type="PANTHER" id="PTHR20515">
    <property type="entry name" value="BETA-DEFENSIN"/>
    <property type="match status" value="1"/>
</dbReference>
<dbReference type="PANTHER" id="PTHR20515:SF2">
    <property type="entry name" value="DEFENSIN BETA 4A"/>
    <property type="match status" value="1"/>
</dbReference>
<dbReference type="Pfam" id="PF00711">
    <property type="entry name" value="Defensin_beta"/>
    <property type="match status" value="1"/>
</dbReference>
<dbReference type="SMART" id="SM00048">
    <property type="entry name" value="DEFSN"/>
    <property type="match status" value="1"/>
</dbReference>
<dbReference type="SUPFAM" id="SSF57392">
    <property type="entry name" value="Defensin-like"/>
    <property type="match status" value="1"/>
</dbReference>
<reference key="1">
    <citation type="submission" date="2000-08" db="EMBL/GenBank/DDBJ databases">
        <title>Beta defensin-encoding genes are selected for divergent sequences of the mature anti-bacterial peptide.</title>
        <authorList>
            <person name="Kurts B."/>
            <person name="Pitra C."/>
            <person name="Schwerin M."/>
            <person name="Seyfert H.-M."/>
        </authorList>
    </citation>
    <scope>NUCLEOTIDE SEQUENCE [GENOMIC DNA]</scope>
</reference>
<reference key="2">
    <citation type="journal article" date="1998" name="Infect. Immun.">
        <title>Expression of beta-defensin genes in bovine alveolar macrophages.</title>
        <authorList>
            <person name="Ryan L.K."/>
            <person name="Rhodes J."/>
            <person name="Bhat M."/>
            <person name="Diamond G."/>
        </authorList>
    </citation>
    <scope>NUCLEOTIDE SEQUENCE [MRNA] OF 1-54</scope>
    <scope>TISSUE SPECIFICITY</scope>
    <source>
        <tissue>Alveolar macrophage</tissue>
    </source>
</reference>
<reference key="3">
    <citation type="journal article" date="1993" name="J. Biol. Chem.">
        <title>Purification, primary structures, and antibacterial activities of beta-defensins, a new family of antimicrobial peptides from bovine neutrophils.</title>
        <authorList>
            <person name="Selsted M.E."/>
            <person name="Tang Y.-Q."/>
            <person name="Morris W.L."/>
            <person name="McGuire P.A."/>
            <person name="Novotny M.J."/>
            <person name="Smith W."/>
            <person name="Henschen A.H."/>
            <person name="Cullor J.S."/>
        </authorList>
    </citation>
    <scope>PROTEIN SEQUENCE OF 23-64</scope>
    <scope>PYROGLUTAMATE FORMATION AT GLN-23</scope>
    <scope>FUNCTION</scope>
    <scope>TISSUE SPECIFICITY</scope>
    <source>
        <strain>Hereford</strain>
        <tissue>Neutrophil</tissue>
    </source>
</reference>
<reference key="4">
    <citation type="submission" date="1996-05" db="UniProtKB">
        <authorList>
            <person name="Selsted M.E."/>
        </authorList>
    </citation>
    <scope>SEQUENCE REVISION TO C-TERMINUS</scope>
</reference>
<protein>
    <recommendedName>
        <fullName>Beta-defensin 5</fullName>
    </recommendedName>
    <alternativeName>
        <fullName>BNBD-5</fullName>
    </alternativeName>
    <alternativeName>
        <fullName>BNDB-5</fullName>
    </alternativeName>
</protein>
<proteinExistence type="evidence at protein level"/>